<feature type="chain" id="PRO_0000055577" description="Catalase-peroxidase">
    <location>
        <begin position="1"/>
        <end position="740"/>
    </location>
</feature>
<feature type="region of interest" description="Disordered" evidence="2">
    <location>
        <begin position="1"/>
        <end position="21"/>
    </location>
</feature>
<feature type="compositionally biased region" description="Basic and acidic residues" evidence="2">
    <location>
        <begin position="1"/>
        <end position="14"/>
    </location>
</feature>
<feature type="active site" description="Proton acceptor" evidence="1">
    <location>
        <position position="109"/>
    </location>
</feature>
<feature type="binding site" description="axial binding residue" evidence="1">
    <location>
        <position position="272"/>
    </location>
    <ligand>
        <name>heme b</name>
        <dbReference type="ChEBI" id="CHEBI:60344"/>
    </ligand>
    <ligandPart>
        <name>Fe</name>
        <dbReference type="ChEBI" id="CHEBI:18248"/>
    </ligandPart>
</feature>
<feature type="site" description="Transition state stabilizer" evidence="1">
    <location>
        <position position="105"/>
    </location>
</feature>
<feature type="cross-link" description="Tryptophyl-tyrosyl-methioninium (Trp-Tyr) (with M-257)" evidence="1">
    <location>
        <begin position="108"/>
        <end position="231"/>
    </location>
</feature>
<feature type="cross-link" description="Tryptophyl-tyrosyl-methioninium (Tyr-Met) (with W-108)" evidence="1">
    <location>
        <begin position="231"/>
        <end position="257"/>
    </location>
</feature>
<protein>
    <recommendedName>
        <fullName evidence="1">Catalase-peroxidase</fullName>
        <shortName evidence="1">CP</shortName>
        <ecNumber evidence="1">1.11.1.21</ecNumber>
    </recommendedName>
    <alternativeName>
        <fullName evidence="1">Peroxidase/catalase</fullName>
    </alternativeName>
</protein>
<dbReference type="EC" id="1.11.1.21" evidence="1"/>
<dbReference type="EMBL" id="Y14317">
    <property type="protein sequence ID" value="CAA74698.1"/>
    <property type="molecule type" value="Genomic_DNA"/>
</dbReference>
<dbReference type="SMR" id="O87864"/>
<dbReference type="PeroxiBase" id="2330">
    <property type="entry name" value="SretCP01"/>
</dbReference>
<dbReference type="KEGG" id="srw:TUE45_00516"/>
<dbReference type="GO" id="GO:0005829">
    <property type="term" value="C:cytosol"/>
    <property type="evidence" value="ECO:0007669"/>
    <property type="project" value="TreeGrafter"/>
</dbReference>
<dbReference type="GO" id="GO:0004096">
    <property type="term" value="F:catalase activity"/>
    <property type="evidence" value="ECO:0007669"/>
    <property type="project" value="UniProtKB-UniRule"/>
</dbReference>
<dbReference type="GO" id="GO:0020037">
    <property type="term" value="F:heme binding"/>
    <property type="evidence" value="ECO:0007669"/>
    <property type="project" value="InterPro"/>
</dbReference>
<dbReference type="GO" id="GO:0046872">
    <property type="term" value="F:metal ion binding"/>
    <property type="evidence" value="ECO:0007669"/>
    <property type="project" value="UniProtKB-KW"/>
</dbReference>
<dbReference type="GO" id="GO:0070301">
    <property type="term" value="P:cellular response to hydrogen peroxide"/>
    <property type="evidence" value="ECO:0007669"/>
    <property type="project" value="TreeGrafter"/>
</dbReference>
<dbReference type="GO" id="GO:0042744">
    <property type="term" value="P:hydrogen peroxide catabolic process"/>
    <property type="evidence" value="ECO:0007669"/>
    <property type="project" value="UniProtKB-KW"/>
</dbReference>
<dbReference type="CDD" id="cd00649">
    <property type="entry name" value="catalase_peroxidase_1"/>
    <property type="match status" value="1"/>
</dbReference>
<dbReference type="CDD" id="cd08200">
    <property type="entry name" value="catalase_peroxidase_2"/>
    <property type="match status" value="1"/>
</dbReference>
<dbReference type="FunFam" id="1.10.420.10:FF:000002">
    <property type="entry name" value="Catalase-peroxidase"/>
    <property type="match status" value="1"/>
</dbReference>
<dbReference type="FunFam" id="1.10.420.10:FF:000004">
    <property type="entry name" value="Catalase-peroxidase"/>
    <property type="match status" value="1"/>
</dbReference>
<dbReference type="FunFam" id="1.10.520.10:FF:000002">
    <property type="entry name" value="Catalase-peroxidase"/>
    <property type="match status" value="1"/>
</dbReference>
<dbReference type="Gene3D" id="1.10.520.10">
    <property type="match status" value="2"/>
</dbReference>
<dbReference type="Gene3D" id="1.10.420.10">
    <property type="entry name" value="Peroxidase, domain 2"/>
    <property type="match status" value="2"/>
</dbReference>
<dbReference type="HAMAP" id="MF_01961">
    <property type="entry name" value="Catal_peroxid"/>
    <property type="match status" value="1"/>
</dbReference>
<dbReference type="InterPro" id="IPR000763">
    <property type="entry name" value="Catalase_peroxidase"/>
</dbReference>
<dbReference type="InterPro" id="IPR002016">
    <property type="entry name" value="Haem_peroxidase"/>
</dbReference>
<dbReference type="InterPro" id="IPR010255">
    <property type="entry name" value="Haem_peroxidase_sf"/>
</dbReference>
<dbReference type="InterPro" id="IPR019794">
    <property type="entry name" value="Peroxidases_AS"/>
</dbReference>
<dbReference type="InterPro" id="IPR019793">
    <property type="entry name" value="Peroxidases_heam-ligand_BS"/>
</dbReference>
<dbReference type="NCBIfam" id="TIGR00198">
    <property type="entry name" value="cat_per_HPI"/>
    <property type="match status" value="1"/>
</dbReference>
<dbReference type="NCBIfam" id="NF011635">
    <property type="entry name" value="PRK15061.1"/>
    <property type="match status" value="1"/>
</dbReference>
<dbReference type="PANTHER" id="PTHR30555:SF0">
    <property type="entry name" value="CATALASE-PEROXIDASE"/>
    <property type="match status" value="1"/>
</dbReference>
<dbReference type="PANTHER" id="PTHR30555">
    <property type="entry name" value="HYDROPEROXIDASE I, BIFUNCTIONAL CATALASE-PEROXIDASE"/>
    <property type="match status" value="1"/>
</dbReference>
<dbReference type="Pfam" id="PF00141">
    <property type="entry name" value="peroxidase"/>
    <property type="match status" value="2"/>
</dbReference>
<dbReference type="PRINTS" id="PR00460">
    <property type="entry name" value="BPEROXIDASE"/>
</dbReference>
<dbReference type="PRINTS" id="PR00458">
    <property type="entry name" value="PEROXIDASE"/>
</dbReference>
<dbReference type="SUPFAM" id="SSF48113">
    <property type="entry name" value="Heme-dependent peroxidases"/>
    <property type="match status" value="2"/>
</dbReference>
<dbReference type="PROSITE" id="PS00435">
    <property type="entry name" value="PEROXIDASE_1"/>
    <property type="match status" value="1"/>
</dbReference>
<dbReference type="PROSITE" id="PS00436">
    <property type="entry name" value="PEROXIDASE_2"/>
    <property type="match status" value="1"/>
</dbReference>
<dbReference type="PROSITE" id="PS50873">
    <property type="entry name" value="PEROXIDASE_4"/>
    <property type="match status" value="1"/>
</dbReference>
<name>KATG_STRRE</name>
<gene>
    <name evidence="1" type="primary">katG</name>
    <name type="synonym">cpeB</name>
</gene>
<accession>O87864</accession>
<comment type="function">
    <text evidence="1 3">Bifunctional enzyme with both catalase and broad-spectrum peroxidase activity.</text>
</comment>
<comment type="catalytic activity">
    <reaction evidence="1">
        <text>H2O2 + AH2 = A + 2 H2O</text>
        <dbReference type="Rhea" id="RHEA:30275"/>
        <dbReference type="ChEBI" id="CHEBI:13193"/>
        <dbReference type="ChEBI" id="CHEBI:15377"/>
        <dbReference type="ChEBI" id="CHEBI:16240"/>
        <dbReference type="ChEBI" id="CHEBI:17499"/>
        <dbReference type="EC" id="1.11.1.21"/>
    </reaction>
</comment>
<comment type="catalytic activity">
    <reaction evidence="1">
        <text>2 H2O2 = O2 + 2 H2O</text>
        <dbReference type="Rhea" id="RHEA:20309"/>
        <dbReference type="ChEBI" id="CHEBI:15377"/>
        <dbReference type="ChEBI" id="CHEBI:15379"/>
        <dbReference type="ChEBI" id="CHEBI:16240"/>
        <dbReference type="EC" id="1.11.1.21"/>
    </reaction>
</comment>
<comment type="cofactor">
    <cofactor>
        <name>heme b</name>
        <dbReference type="ChEBI" id="CHEBI:60344"/>
    </cofactor>
    <text>Binds 1 heme b (iron(II)-protoporphyrin IX) group per dimer.</text>
</comment>
<comment type="subunit">
    <text evidence="3">Homodimer.</text>
</comment>
<comment type="PTM">
    <text evidence="1">Formation of the three residue Trp-Tyr-Met cross-link is important for the catalase, but not the peroxidase activity of the enzyme.</text>
</comment>
<comment type="similarity">
    <text evidence="1">Belongs to the peroxidase family. Peroxidase/catalase subfamily.</text>
</comment>
<sequence>MTENHDAIVTDAKSEGSGGCPVAHDRALHPTQGGGNRQWWPERLNLKILAKNPAVANPLDEDFDYAEAFKALDLAAVKRDIAEVLTTSQDWWPADFGNYGPLMIRMAWHSAGTYRISDGRGGAGAGQQRFAPLNSWPDNGNLDKARRLLWPVKKKYGQSISWADLLILTGNVALETMGFKTFGFGGGRADVWEAEEDVYWGPETTWLDDRRYTGDRELENPLGAVQMGLIYVNPEGPNGNPDPIAAARDIRETFRRMAMNDEETVALIAGGHTFGKTHGAGPADHVGADPEAASLEEQGLGWRSTYGTGKGADAITSGLEVTWTSTPTQWSNGFFKNLFEYEYELEQSPAGAHQWVAKNAPEIIPDAHDPSKKHRPRMLTTDLSLRFDPIYEPISRRFYENPEEFADAFARAWYKLTHRDMGPKSLYLGPEVPEETLLWQDPLPEREGELIDDADIAILKTKLLESGLSVSQLVTTAWASASTFRASDKRGGANGARIRLAPQRGWEVNDPDQLAQVLRTLENVQQEFNASSGAKKVSLADLIVLGGAAGVEKAAKEAGFEIQVPFTPGRVDATEEHTDVESFEALEPTADGFRNYLGKGNRLPAEYLLLDKANLLNLSAPEMTVLVGGLRVLGANHQQSQLGVFTKTPGVLTNDFFVNLLDMGTTWKATSEDQTTFEGRDAATGEVKWAGSRADLVFGSNSELRALAEVYASDDAKEKFVKDFVAAWHKVMDADRFDLV</sequence>
<evidence type="ECO:0000255" key="1">
    <source>
        <dbReference type="HAMAP-Rule" id="MF_01961"/>
    </source>
</evidence>
<evidence type="ECO:0000256" key="2">
    <source>
        <dbReference type="SAM" id="MobiDB-lite"/>
    </source>
</evidence>
<evidence type="ECO:0000269" key="3">
    <source>
    </source>
</evidence>
<proteinExistence type="evidence at protein level"/>
<organism>
    <name type="scientific">Streptomyces reticuli</name>
    <dbReference type="NCBI Taxonomy" id="1926"/>
    <lineage>
        <taxon>Bacteria</taxon>
        <taxon>Bacillati</taxon>
        <taxon>Actinomycetota</taxon>
        <taxon>Actinomycetes</taxon>
        <taxon>Kitasatosporales</taxon>
        <taxon>Streptomycetaceae</taxon>
        <taxon>Streptomyces</taxon>
    </lineage>
</organism>
<keyword id="KW-0903">Direct protein sequencing</keyword>
<keyword id="KW-0349">Heme</keyword>
<keyword id="KW-0376">Hydrogen peroxide</keyword>
<keyword id="KW-0408">Iron</keyword>
<keyword id="KW-0479">Metal-binding</keyword>
<keyword id="KW-0560">Oxidoreductase</keyword>
<keyword id="KW-0575">Peroxidase</keyword>
<reference key="1">
    <citation type="journal article" date="1999" name="Microbiology">
        <title>The mycelium-associated Streptomyces reticuli catalase-peroxidase, its gene and regulation by FurS.</title>
        <authorList>
            <person name="Zou P."/>
            <person name="Borovok I."/>
            <person name="Ortiz de Orue Lucana D."/>
            <person name="Muller D."/>
            <person name="Schrempf H."/>
        </authorList>
    </citation>
    <scope>NUCLEOTIDE SEQUENCE [GENOMIC DNA]</scope>
    <scope>PARTIAL PROTEIN SEQUENCE</scope>
    <scope>FUNCTION</scope>
    <scope>SUBUNIT</scope>
    <scope>HEME-BINDING</scope>
    <source>
        <strain>Tu45</strain>
    </source>
</reference>